<dbReference type="EMBL" id="X04998">
    <property type="protein sequence ID" value="CAA28657.1"/>
    <property type="molecule type" value="Genomic_RNA"/>
</dbReference>
<dbReference type="RefSeq" id="YP_209234.1">
    <property type="nucleotide sequence ID" value="AC_000192.1"/>
</dbReference>
<dbReference type="SMR" id="Q66181"/>
<dbReference type="KEGG" id="vg:3283256"/>
<dbReference type="Proteomes" id="UP000007193">
    <property type="component" value="Genome"/>
</dbReference>
<dbReference type="GO" id="GO:0033644">
    <property type="term" value="C:host cell membrane"/>
    <property type="evidence" value="ECO:0007669"/>
    <property type="project" value="UniProtKB-SubCell"/>
</dbReference>
<dbReference type="GO" id="GO:0016020">
    <property type="term" value="C:membrane"/>
    <property type="evidence" value="ECO:0007669"/>
    <property type="project" value="UniProtKB-KW"/>
</dbReference>
<dbReference type="InterPro" id="IPR005603">
    <property type="entry name" value="Corona_NS4"/>
</dbReference>
<dbReference type="Pfam" id="PF03905">
    <property type="entry name" value="Corona_NS4"/>
    <property type="match status" value="1"/>
</dbReference>
<accession>Q66181</accession>
<gene>
    <name type="ORF">4</name>
</gene>
<organism>
    <name type="scientific">Murine coronavirus (strain JHM)</name>
    <name type="common">MHV-JHM</name>
    <name type="synonym">Murine hepatitis virus</name>
    <dbReference type="NCBI Taxonomy" id="11144"/>
    <lineage>
        <taxon>Viruses</taxon>
        <taxon>Riboviria</taxon>
        <taxon>Orthornavirae</taxon>
        <taxon>Pisuviricota</taxon>
        <taxon>Pisoniviricetes</taxon>
        <taxon>Nidovirales</taxon>
        <taxon>Cornidovirineae</taxon>
        <taxon>Coronaviridae</taxon>
        <taxon>Orthocoronavirinae</taxon>
        <taxon>Betacoronavirus</taxon>
        <taxon>Embecovirus</taxon>
        <taxon>Murine coronavirus</taxon>
    </lineage>
</organism>
<reference key="1">
    <citation type="journal article" date="1985" name="J. Gen. Virol.">
        <title>Coding sequence of coronavirus MHV-JHM mRNA 4.</title>
        <authorList>
            <person name="Skinner M.A."/>
            <person name="Siddell S.G."/>
        </authorList>
    </citation>
    <scope>NUCLEOTIDE SEQUENCE [GENOMIC RNA]</scope>
</reference>
<evidence type="ECO:0000255" key="1"/>
<evidence type="ECO:0000305" key="2"/>
<proteinExistence type="inferred from homology"/>
<protein>
    <recommendedName>
        <fullName>Non-structural protein 4</fullName>
        <shortName>ns4</shortName>
    </recommendedName>
    <alternativeName>
        <fullName>Accessory protein 4</fullName>
    </alternativeName>
</protein>
<feature type="chain" id="PRO_0000283965" description="Non-structural protein 4">
    <location>
        <begin position="1"/>
        <end position="139"/>
    </location>
</feature>
<feature type="transmembrane region" description="Helical" evidence="1">
    <location>
        <begin position="12"/>
        <end position="32"/>
    </location>
</feature>
<comment type="subcellular location">
    <subcellularLocation>
        <location evidence="2">Host membrane</location>
        <topology evidence="2">Single-pass membrane protein</topology>
    </subcellularLocation>
</comment>
<comment type="similarity">
    <text evidence="2">Belongs to the coronaviruses ns4/ns4.8 protein family.</text>
</comment>
<keyword id="KW-1043">Host membrane</keyword>
<keyword id="KW-0472">Membrane</keyword>
<keyword id="KW-0812">Transmembrane</keyword>
<keyword id="KW-1133">Transmembrane helix</keyword>
<organismHost>
    <name type="scientific">Mus musculus</name>
    <name type="common">Mouse</name>
    <dbReference type="NCBI Taxonomy" id="10090"/>
</organismHost>
<sequence>MALIGPKTTIAAVFIGPFLVACMLGIGLVYLLQLQVQIFHVKDTIRVTGKPATVSYTTSTPVTPVATTLDGTTYTLIRPTSSYTRVYLGSSRGFDTSTFGPKTLDYITSSKPHLNSGRPYTLRHLPKYMTPPATWRFGL</sequence>
<name>NS4_CVMJH</name>